<reference key="1">
    <citation type="journal article" date="2006" name="Genome Res.">
        <title>Skewed genomic variability in strains of the toxigenic bacterial pathogen, Clostridium perfringens.</title>
        <authorList>
            <person name="Myers G.S.A."/>
            <person name="Rasko D.A."/>
            <person name="Cheung J.K."/>
            <person name="Ravel J."/>
            <person name="Seshadri R."/>
            <person name="DeBoy R.T."/>
            <person name="Ren Q."/>
            <person name="Varga J."/>
            <person name="Awad M.M."/>
            <person name="Brinkac L.M."/>
            <person name="Daugherty S.C."/>
            <person name="Haft D.H."/>
            <person name="Dodson R.J."/>
            <person name="Madupu R."/>
            <person name="Nelson W.C."/>
            <person name="Rosovitz M.J."/>
            <person name="Sullivan S.A."/>
            <person name="Khouri H."/>
            <person name="Dimitrov G.I."/>
            <person name="Watkins K.L."/>
            <person name="Mulligan S."/>
            <person name="Benton J."/>
            <person name="Radune D."/>
            <person name="Fisher D.J."/>
            <person name="Atkins H.S."/>
            <person name="Hiscox T."/>
            <person name="Jost B.H."/>
            <person name="Billington S.J."/>
            <person name="Songer J.G."/>
            <person name="McClane B.A."/>
            <person name="Titball R.W."/>
            <person name="Rood J.I."/>
            <person name="Melville S.B."/>
            <person name="Paulsen I.T."/>
        </authorList>
    </citation>
    <scope>NUCLEOTIDE SEQUENCE [LARGE SCALE GENOMIC DNA]</scope>
    <source>
        <strain>ATCC 13124 / DSM 756 / JCM 1290 / NCIMB 6125 / NCTC 8237 / S 107 / Type A</strain>
    </source>
</reference>
<organism>
    <name type="scientific">Clostridium perfringens (strain ATCC 13124 / DSM 756 / JCM 1290 / NCIMB 6125 / NCTC 8237 / Type A)</name>
    <dbReference type="NCBI Taxonomy" id="195103"/>
    <lineage>
        <taxon>Bacteria</taxon>
        <taxon>Bacillati</taxon>
        <taxon>Bacillota</taxon>
        <taxon>Clostridia</taxon>
        <taxon>Eubacteriales</taxon>
        <taxon>Clostridiaceae</taxon>
        <taxon>Clostridium</taxon>
    </lineage>
</organism>
<keyword id="KW-0479">Metal-binding</keyword>
<keyword id="KW-0687">Ribonucleoprotein</keyword>
<keyword id="KW-0689">Ribosomal protein</keyword>
<keyword id="KW-0694">RNA-binding</keyword>
<keyword id="KW-0699">rRNA-binding</keyword>
<keyword id="KW-0862">Zinc</keyword>
<protein>
    <recommendedName>
        <fullName evidence="1">Small ribosomal subunit protein uS14</fullName>
    </recommendedName>
    <alternativeName>
        <fullName evidence="2">30S ribosomal protein S14 type Z</fullName>
    </alternativeName>
</protein>
<name>RS14Z_CLOP1</name>
<comment type="function">
    <text evidence="1">Binds 16S rRNA, required for the assembly of 30S particles and may also be responsible for determining the conformation of the 16S rRNA at the A site.</text>
</comment>
<comment type="cofactor">
    <cofactor evidence="1">
        <name>Zn(2+)</name>
        <dbReference type="ChEBI" id="CHEBI:29105"/>
    </cofactor>
    <text evidence="1">Binds 1 zinc ion per subunit.</text>
</comment>
<comment type="subunit">
    <text evidence="1">Part of the 30S ribosomal subunit. Contacts proteins S3 and S10.</text>
</comment>
<comment type="similarity">
    <text evidence="1">Belongs to the universal ribosomal protein uS14 family. Zinc-binding uS14 subfamily.</text>
</comment>
<dbReference type="EMBL" id="CP000246">
    <property type="protein sequence ID" value="ABG84390.1"/>
    <property type="molecule type" value="Genomic_DNA"/>
</dbReference>
<dbReference type="RefSeq" id="WP_003470274.1">
    <property type="nucleotide sequence ID" value="NC_008261.1"/>
</dbReference>
<dbReference type="SMR" id="Q0TMQ9"/>
<dbReference type="STRING" id="195103.CPF_2701"/>
<dbReference type="PaxDb" id="195103-CPF_2701"/>
<dbReference type="KEGG" id="cpf:CPF_2701"/>
<dbReference type="eggNOG" id="COG0199">
    <property type="taxonomic scope" value="Bacteria"/>
</dbReference>
<dbReference type="HOGENOM" id="CLU_139869_3_0_9"/>
<dbReference type="Proteomes" id="UP000001823">
    <property type="component" value="Chromosome"/>
</dbReference>
<dbReference type="GO" id="GO:0005737">
    <property type="term" value="C:cytoplasm"/>
    <property type="evidence" value="ECO:0007669"/>
    <property type="project" value="UniProtKB-ARBA"/>
</dbReference>
<dbReference type="GO" id="GO:0015935">
    <property type="term" value="C:small ribosomal subunit"/>
    <property type="evidence" value="ECO:0007669"/>
    <property type="project" value="TreeGrafter"/>
</dbReference>
<dbReference type="GO" id="GO:0019843">
    <property type="term" value="F:rRNA binding"/>
    <property type="evidence" value="ECO:0007669"/>
    <property type="project" value="UniProtKB-UniRule"/>
</dbReference>
<dbReference type="GO" id="GO:0003735">
    <property type="term" value="F:structural constituent of ribosome"/>
    <property type="evidence" value="ECO:0007669"/>
    <property type="project" value="InterPro"/>
</dbReference>
<dbReference type="GO" id="GO:0008270">
    <property type="term" value="F:zinc ion binding"/>
    <property type="evidence" value="ECO:0007669"/>
    <property type="project" value="UniProtKB-UniRule"/>
</dbReference>
<dbReference type="GO" id="GO:0006412">
    <property type="term" value="P:translation"/>
    <property type="evidence" value="ECO:0007669"/>
    <property type="project" value="UniProtKB-UniRule"/>
</dbReference>
<dbReference type="FunFam" id="4.10.830.10:FF:000001">
    <property type="entry name" value="30S ribosomal protein S14 type Z"/>
    <property type="match status" value="1"/>
</dbReference>
<dbReference type="Gene3D" id="4.10.830.10">
    <property type="entry name" value="30s Ribosomal Protein S14, Chain N"/>
    <property type="match status" value="1"/>
</dbReference>
<dbReference type="HAMAP" id="MF_01364_B">
    <property type="entry name" value="Ribosomal_uS14_2_B"/>
    <property type="match status" value="1"/>
</dbReference>
<dbReference type="InterPro" id="IPR001209">
    <property type="entry name" value="Ribosomal_uS14"/>
</dbReference>
<dbReference type="InterPro" id="IPR023053">
    <property type="entry name" value="Ribosomal_uS14_bact"/>
</dbReference>
<dbReference type="InterPro" id="IPR018271">
    <property type="entry name" value="Ribosomal_uS14_CS"/>
</dbReference>
<dbReference type="InterPro" id="IPR043140">
    <property type="entry name" value="Ribosomal_uS14_sf"/>
</dbReference>
<dbReference type="NCBIfam" id="NF005974">
    <property type="entry name" value="PRK08061.1"/>
    <property type="match status" value="1"/>
</dbReference>
<dbReference type="PANTHER" id="PTHR19836">
    <property type="entry name" value="30S RIBOSOMAL PROTEIN S14"/>
    <property type="match status" value="1"/>
</dbReference>
<dbReference type="PANTHER" id="PTHR19836:SF19">
    <property type="entry name" value="SMALL RIBOSOMAL SUBUNIT PROTEIN US14M"/>
    <property type="match status" value="1"/>
</dbReference>
<dbReference type="Pfam" id="PF00253">
    <property type="entry name" value="Ribosomal_S14"/>
    <property type="match status" value="1"/>
</dbReference>
<dbReference type="SUPFAM" id="SSF57716">
    <property type="entry name" value="Glucocorticoid receptor-like (DNA-binding domain)"/>
    <property type="match status" value="1"/>
</dbReference>
<dbReference type="PROSITE" id="PS00527">
    <property type="entry name" value="RIBOSOMAL_S14"/>
    <property type="match status" value="1"/>
</dbReference>
<feature type="chain" id="PRO_0000269091" description="Small ribosomal subunit protein uS14">
    <location>
        <begin position="1"/>
        <end position="61"/>
    </location>
</feature>
<feature type="binding site" evidence="1">
    <location>
        <position position="24"/>
    </location>
    <ligand>
        <name>Zn(2+)</name>
        <dbReference type="ChEBI" id="CHEBI:29105"/>
    </ligand>
</feature>
<feature type="binding site" evidence="1">
    <location>
        <position position="27"/>
    </location>
    <ligand>
        <name>Zn(2+)</name>
        <dbReference type="ChEBI" id="CHEBI:29105"/>
    </ligand>
</feature>
<feature type="binding site" evidence="1">
    <location>
        <position position="40"/>
    </location>
    <ligand>
        <name>Zn(2+)</name>
        <dbReference type="ChEBI" id="CHEBI:29105"/>
    </ligand>
</feature>
<feature type="binding site" evidence="1">
    <location>
        <position position="43"/>
    </location>
    <ligand>
        <name>Zn(2+)</name>
        <dbReference type="ChEBI" id="CHEBI:29105"/>
    </ligand>
</feature>
<accession>Q0TMQ9</accession>
<proteinExistence type="inferred from homology"/>
<gene>
    <name evidence="1" type="primary">rpsZ</name>
    <name evidence="1" type="synonym">rpsN</name>
    <name type="ordered locus">CPF_2701</name>
</gene>
<evidence type="ECO:0000255" key="1">
    <source>
        <dbReference type="HAMAP-Rule" id="MF_01364"/>
    </source>
</evidence>
<evidence type="ECO:0000305" key="2"/>
<sequence>MARKAMIEKWKKEPKYKTRAYTRCRLCGRPHSVLKKFGICRICFRELAYKGEIPGCRKASW</sequence>